<keyword id="KW-0007">Acetylation</keyword>
<keyword id="KW-0106">Calcium</keyword>
<keyword id="KW-0479">Metal-binding</keyword>
<keyword id="KW-0488">Methylation</keyword>
<keyword id="KW-0677">Repeat</keyword>
<protein>
    <recommendedName>
        <fullName>Calmodulin-1</fullName>
        <shortName>CaM-1</shortName>
    </recommendedName>
</protein>
<proteinExistence type="evidence at protein level"/>
<organism>
    <name type="scientific">Petunia hybrida</name>
    <name type="common">Petunia</name>
    <dbReference type="NCBI Taxonomy" id="4102"/>
    <lineage>
        <taxon>Eukaryota</taxon>
        <taxon>Viridiplantae</taxon>
        <taxon>Streptophyta</taxon>
        <taxon>Embryophyta</taxon>
        <taxon>Tracheophyta</taxon>
        <taxon>Spermatophyta</taxon>
        <taxon>Magnoliopsida</taxon>
        <taxon>eudicotyledons</taxon>
        <taxon>Gunneridae</taxon>
        <taxon>Pentapetalae</taxon>
        <taxon>asterids</taxon>
        <taxon>lamiids</taxon>
        <taxon>Solanales</taxon>
        <taxon>Solanaceae</taxon>
        <taxon>Petunioideae</taxon>
        <taxon>Petunia</taxon>
    </lineage>
</organism>
<accession>P62199</accession>
<accession>P27162</accession>
<accession>P34792</accession>
<gene>
    <name type="primary">CAM81</name>
</gene>
<comment type="function">
    <text>Calmodulin mediates the control of a large number of enzymes, ion channels and other proteins by Ca(2+). Among the enzymes to be stimulated by the calmodulin-Ca(2+) complex are a number of protein kinases and phosphatases.</text>
</comment>
<comment type="interaction">
    <interactant intactId="EBI-8500690">
        <id>P62199</id>
    </interactant>
    <interactant intactId="EBI-8500676">
        <id>C6ZRY5</id>
        <label>100817345</label>
    </interactant>
    <organismsDiffer>true</organismsDiffer>
    <experiments>9</experiments>
</comment>
<comment type="miscellaneous">
    <text>This protein has four functional calcium-binding sites.</text>
</comment>
<comment type="similarity">
    <text evidence="3">Belongs to the calmodulin family.</text>
</comment>
<dbReference type="EMBL" id="M80836">
    <property type="protein sequence ID" value="AAA33706.1"/>
    <property type="molecule type" value="mRNA"/>
</dbReference>
<dbReference type="PIR" id="S70768">
    <property type="entry name" value="S70768"/>
</dbReference>
<dbReference type="SMR" id="P62199"/>
<dbReference type="IntAct" id="P62199">
    <property type="interactions" value="4"/>
</dbReference>
<dbReference type="MINT" id="P62199"/>
<dbReference type="GO" id="GO:0016460">
    <property type="term" value="C:myosin II complex"/>
    <property type="evidence" value="ECO:0007669"/>
    <property type="project" value="TreeGrafter"/>
</dbReference>
<dbReference type="GO" id="GO:0005509">
    <property type="term" value="F:calcium ion binding"/>
    <property type="evidence" value="ECO:0007669"/>
    <property type="project" value="InterPro"/>
</dbReference>
<dbReference type="CDD" id="cd00051">
    <property type="entry name" value="EFh"/>
    <property type="match status" value="2"/>
</dbReference>
<dbReference type="FunFam" id="1.10.238.10:FF:000034">
    <property type="entry name" value="Calmodulin"/>
    <property type="match status" value="1"/>
</dbReference>
<dbReference type="FunFam" id="1.10.238.10:FF:000042">
    <property type="entry name" value="Calmodulin"/>
    <property type="match status" value="1"/>
</dbReference>
<dbReference type="Gene3D" id="1.10.238.10">
    <property type="entry name" value="EF-hand"/>
    <property type="match status" value="3"/>
</dbReference>
<dbReference type="InterPro" id="IPR050230">
    <property type="entry name" value="CALM/Myosin/TropC-like"/>
</dbReference>
<dbReference type="InterPro" id="IPR011992">
    <property type="entry name" value="EF-hand-dom_pair"/>
</dbReference>
<dbReference type="InterPro" id="IPR018247">
    <property type="entry name" value="EF_Hand_1_Ca_BS"/>
</dbReference>
<dbReference type="InterPro" id="IPR002048">
    <property type="entry name" value="EF_hand_dom"/>
</dbReference>
<dbReference type="PANTHER" id="PTHR23048:SF53">
    <property type="entry name" value="CALMODULIN"/>
    <property type="match status" value="1"/>
</dbReference>
<dbReference type="PANTHER" id="PTHR23048">
    <property type="entry name" value="MYOSIN LIGHT CHAIN 1, 3"/>
    <property type="match status" value="1"/>
</dbReference>
<dbReference type="Pfam" id="PF13499">
    <property type="entry name" value="EF-hand_7"/>
    <property type="match status" value="2"/>
</dbReference>
<dbReference type="SMART" id="SM00054">
    <property type="entry name" value="EFh"/>
    <property type="match status" value="4"/>
</dbReference>
<dbReference type="SUPFAM" id="SSF47473">
    <property type="entry name" value="EF-hand"/>
    <property type="match status" value="1"/>
</dbReference>
<dbReference type="PROSITE" id="PS00018">
    <property type="entry name" value="EF_HAND_1"/>
    <property type="match status" value="4"/>
</dbReference>
<dbReference type="PROSITE" id="PS50222">
    <property type="entry name" value="EF_HAND_2"/>
    <property type="match status" value="4"/>
</dbReference>
<sequence>MADQLTDDQISEFKEAFSLFDKDGDGCITTKELGTVMRSLGQNPTEAELQDMINEVDADGNGTIDFPEFLNLMARKMKDTDSEEELKEAFRVFDKDQNGFISAAELRHVMTNLGEKLTDEEVDEMIREADVDGDGQINYEEFVKVMMAK</sequence>
<reference key="1">
    <citation type="submission" date="1991-10" db="EMBL/GenBank/DDBJ databases">
        <title>Molecular characterization of petunia cDNAs encoding calmodulins and a calmodulin-related protein.</title>
        <authorList>
            <person name="Chua N.H."/>
            <person name="Carlenor E."/>
            <person name="Fromm H."/>
        </authorList>
    </citation>
    <scope>NUCLEOTIDE SEQUENCE [MRNA]</scope>
</reference>
<evidence type="ECO:0000250" key="1"/>
<evidence type="ECO:0000255" key="2">
    <source>
        <dbReference type="PROSITE-ProRule" id="PRU00448"/>
    </source>
</evidence>
<evidence type="ECO:0000305" key="3"/>
<name>CALM1_PETHY</name>
<feature type="initiator methionine" description="Removed" evidence="1">
    <location>
        <position position="1"/>
    </location>
</feature>
<feature type="chain" id="PRO_0000198299" description="Calmodulin-1">
    <location>
        <begin position="2"/>
        <end position="149"/>
    </location>
</feature>
<feature type="domain" description="EF-hand 1" evidence="2">
    <location>
        <begin position="8"/>
        <end position="43"/>
    </location>
</feature>
<feature type="domain" description="EF-hand 2" evidence="2">
    <location>
        <begin position="44"/>
        <end position="79"/>
    </location>
</feature>
<feature type="domain" description="EF-hand 3" evidence="2">
    <location>
        <begin position="81"/>
        <end position="116"/>
    </location>
</feature>
<feature type="domain" description="EF-hand 4" evidence="2">
    <location>
        <begin position="117"/>
        <end position="149"/>
    </location>
</feature>
<feature type="binding site" evidence="2">
    <location>
        <position position="21"/>
    </location>
    <ligand>
        <name>Ca(2+)</name>
        <dbReference type="ChEBI" id="CHEBI:29108"/>
        <label>1</label>
    </ligand>
</feature>
<feature type="binding site" evidence="2">
    <location>
        <position position="23"/>
    </location>
    <ligand>
        <name>Ca(2+)</name>
        <dbReference type="ChEBI" id="CHEBI:29108"/>
        <label>1</label>
    </ligand>
</feature>
<feature type="binding site" evidence="2">
    <location>
        <position position="25"/>
    </location>
    <ligand>
        <name>Ca(2+)</name>
        <dbReference type="ChEBI" id="CHEBI:29108"/>
        <label>1</label>
    </ligand>
</feature>
<feature type="binding site" evidence="2">
    <location>
        <position position="27"/>
    </location>
    <ligand>
        <name>Ca(2+)</name>
        <dbReference type="ChEBI" id="CHEBI:29108"/>
        <label>1</label>
    </ligand>
</feature>
<feature type="binding site" evidence="2">
    <location>
        <position position="32"/>
    </location>
    <ligand>
        <name>Ca(2+)</name>
        <dbReference type="ChEBI" id="CHEBI:29108"/>
        <label>1</label>
    </ligand>
</feature>
<feature type="binding site" evidence="2">
    <location>
        <position position="57"/>
    </location>
    <ligand>
        <name>Ca(2+)</name>
        <dbReference type="ChEBI" id="CHEBI:29108"/>
        <label>2</label>
    </ligand>
</feature>
<feature type="binding site" evidence="2">
    <location>
        <position position="59"/>
    </location>
    <ligand>
        <name>Ca(2+)</name>
        <dbReference type="ChEBI" id="CHEBI:29108"/>
        <label>2</label>
    </ligand>
</feature>
<feature type="binding site" evidence="2">
    <location>
        <position position="61"/>
    </location>
    <ligand>
        <name>Ca(2+)</name>
        <dbReference type="ChEBI" id="CHEBI:29108"/>
        <label>2</label>
    </ligand>
</feature>
<feature type="binding site" evidence="2">
    <location>
        <position position="63"/>
    </location>
    <ligand>
        <name>Ca(2+)</name>
        <dbReference type="ChEBI" id="CHEBI:29108"/>
        <label>2</label>
    </ligand>
</feature>
<feature type="binding site" evidence="2">
    <location>
        <position position="68"/>
    </location>
    <ligand>
        <name>Ca(2+)</name>
        <dbReference type="ChEBI" id="CHEBI:29108"/>
        <label>2</label>
    </ligand>
</feature>
<feature type="binding site" evidence="2">
    <location>
        <position position="94"/>
    </location>
    <ligand>
        <name>Ca(2+)</name>
        <dbReference type="ChEBI" id="CHEBI:29108"/>
        <label>3</label>
    </ligand>
</feature>
<feature type="binding site" evidence="2">
    <location>
        <position position="96"/>
    </location>
    <ligand>
        <name>Ca(2+)</name>
        <dbReference type="ChEBI" id="CHEBI:29108"/>
        <label>3</label>
    </ligand>
</feature>
<feature type="binding site" evidence="2">
    <location>
        <position position="98"/>
    </location>
    <ligand>
        <name>Ca(2+)</name>
        <dbReference type="ChEBI" id="CHEBI:29108"/>
        <label>3</label>
    </ligand>
</feature>
<feature type="binding site" evidence="2">
    <location>
        <position position="105"/>
    </location>
    <ligand>
        <name>Ca(2+)</name>
        <dbReference type="ChEBI" id="CHEBI:29108"/>
        <label>3</label>
    </ligand>
</feature>
<feature type="binding site" evidence="2">
    <location>
        <position position="130"/>
    </location>
    <ligand>
        <name>Ca(2+)</name>
        <dbReference type="ChEBI" id="CHEBI:29108"/>
        <label>4</label>
    </ligand>
</feature>
<feature type="binding site" evidence="2">
    <location>
        <position position="132"/>
    </location>
    <ligand>
        <name>Ca(2+)</name>
        <dbReference type="ChEBI" id="CHEBI:29108"/>
        <label>4</label>
    </ligand>
</feature>
<feature type="binding site" evidence="2">
    <location>
        <position position="134"/>
    </location>
    <ligand>
        <name>Ca(2+)</name>
        <dbReference type="ChEBI" id="CHEBI:29108"/>
        <label>4</label>
    </ligand>
</feature>
<feature type="binding site" evidence="2">
    <location>
        <position position="136"/>
    </location>
    <ligand>
        <name>Ca(2+)</name>
        <dbReference type="ChEBI" id="CHEBI:29108"/>
        <label>4</label>
    </ligand>
</feature>
<feature type="binding site" evidence="2">
    <location>
        <position position="141"/>
    </location>
    <ligand>
        <name>Ca(2+)</name>
        <dbReference type="ChEBI" id="CHEBI:29108"/>
        <label>4</label>
    </ligand>
</feature>
<feature type="modified residue" description="N-acetylalanine" evidence="1">
    <location>
        <position position="2"/>
    </location>
</feature>
<feature type="modified residue" description="N6,N6,N6-trimethyllysine" evidence="1">
    <location>
        <position position="116"/>
    </location>
</feature>